<dbReference type="EC" id="2.3.3.13" evidence="1"/>
<dbReference type="EMBL" id="CP000568">
    <property type="protein sequence ID" value="ABN52623.1"/>
    <property type="molecule type" value="Genomic_DNA"/>
</dbReference>
<dbReference type="RefSeq" id="WP_003518251.1">
    <property type="nucleotide sequence ID" value="NC_009012.1"/>
</dbReference>
<dbReference type="SMR" id="A3DF94"/>
<dbReference type="STRING" id="203119.Cthe_1391"/>
<dbReference type="GeneID" id="35804305"/>
<dbReference type="KEGG" id="cth:Cthe_1391"/>
<dbReference type="eggNOG" id="COG0119">
    <property type="taxonomic scope" value="Bacteria"/>
</dbReference>
<dbReference type="HOGENOM" id="CLU_022158_0_1_9"/>
<dbReference type="OrthoDB" id="9804858at2"/>
<dbReference type="UniPathway" id="UPA00048">
    <property type="reaction ID" value="UER00070"/>
</dbReference>
<dbReference type="Proteomes" id="UP000002145">
    <property type="component" value="Chromosome"/>
</dbReference>
<dbReference type="GO" id="GO:0005737">
    <property type="term" value="C:cytoplasm"/>
    <property type="evidence" value="ECO:0007669"/>
    <property type="project" value="UniProtKB-SubCell"/>
</dbReference>
<dbReference type="GO" id="GO:0003852">
    <property type="term" value="F:2-isopropylmalate synthase activity"/>
    <property type="evidence" value="ECO:0007669"/>
    <property type="project" value="UniProtKB-UniRule"/>
</dbReference>
<dbReference type="GO" id="GO:0003985">
    <property type="term" value="F:acetyl-CoA C-acetyltransferase activity"/>
    <property type="evidence" value="ECO:0007669"/>
    <property type="project" value="UniProtKB-UniRule"/>
</dbReference>
<dbReference type="GO" id="GO:0030145">
    <property type="term" value="F:manganese ion binding"/>
    <property type="evidence" value="ECO:0007669"/>
    <property type="project" value="UniProtKB-UniRule"/>
</dbReference>
<dbReference type="GO" id="GO:0009098">
    <property type="term" value="P:L-leucine biosynthetic process"/>
    <property type="evidence" value="ECO:0007669"/>
    <property type="project" value="UniProtKB-UniRule"/>
</dbReference>
<dbReference type="CDD" id="cd07940">
    <property type="entry name" value="DRE_TIM_IPMS"/>
    <property type="match status" value="1"/>
</dbReference>
<dbReference type="FunFam" id="1.10.238.260:FF:000001">
    <property type="entry name" value="2-isopropylmalate synthase"/>
    <property type="match status" value="1"/>
</dbReference>
<dbReference type="FunFam" id="3.20.20.70:FF:000010">
    <property type="entry name" value="2-isopropylmalate synthase"/>
    <property type="match status" value="1"/>
</dbReference>
<dbReference type="Gene3D" id="1.10.238.260">
    <property type="match status" value="1"/>
</dbReference>
<dbReference type="Gene3D" id="3.30.160.270">
    <property type="match status" value="1"/>
</dbReference>
<dbReference type="Gene3D" id="3.20.20.70">
    <property type="entry name" value="Aldolase class I"/>
    <property type="match status" value="1"/>
</dbReference>
<dbReference type="HAMAP" id="MF_01025">
    <property type="entry name" value="LeuA_type1"/>
    <property type="match status" value="1"/>
</dbReference>
<dbReference type="InterPro" id="IPR050073">
    <property type="entry name" value="2-IPM_HCS-like"/>
</dbReference>
<dbReference type="InterPro" id="IPR013709">
    <property type="entry name" value="2-isopropylmalate_synth_dimer"/>
</dbReference>
<dbReference type="InterPro" id="IPR002034">
    <property type="entry name" value="AIPM/Hcit_synth_CS"/>
</dbReference>
<dbReference type="InterPro" id="IPR013785">
    <property type="entry name" value="Aldolase_TIM"/>
</dbReference>
<dbReference type="InterPro" id="IPR054691">
    <property type="entry name" value="LeuA/HCS_post-cat"/>
</dbReference>
<dbReference type="InterPro" id="IPR036230">
    <property type="entry name" value="LeuA_allosteric_dom_sf"/>
</dbReference>
<dbReference type="InterPro" id="IPR005671">
    <property type="entry name" value="LeuA_bact_synth"/>
</dbReference>
<dbReference type="InterPro" id="IPR000891">
    <property type="entry name" value="PYR_CT"/>
</dbReference>
<dbReference type="NCBIfam" id="TIGR00973">
    <property type="entry name" value="leuA_bact"/>
    <property type="match status" value="1"/>
</dbReference>
<dbReference type="NCBIfam" id="NF002086">
    <property type="entry name" value="PRK00915.1-3"/>
    <property type="match status" value="1"/>
</dbReference>
<dbReference type="PANTHER" id="PTHR10277:SF9">
    <property type="entry name" value="2-ISOPROPYLMALATE SYNTHASE 1, CHLOROPLASTIC-RELATED"/>
    <property type="match status" value="1"/>
</dbReference>
<dbReference type="PANTHER" id="PTHR10277">
    <property type="entry name" value="HOMOCITRATE SYNTHASE-RELATED"/>
    <property type="match status" value="1"/>
</dbReference>
<dbReference type="Pfam" id="PF22617">
    <property type="entry name" value="HCS_D2"/>
    <property type="match status" value="1"/>
</dbReference>
<dbReference type="Pfam" id="PF00682">
    <property type="entry name" value="HMGL-like"/>
    <property type="match status" value="1"/>
</dbReference>
<dbReference type="Pfam" id="PF08502">
    <property type="entry name" value="LeuA_dimer"/>
    <property type="match status" value="1"/>
</dbReference>
<dbReference type="SMART" id="SM00917">
    <property type="entry name" value="LeuA_dimer"/>
    <property type="match status" value="1"/>
</dbReference>
<dbReference type="SUPFAM" id="SSF110921">
    <property type="entry name" value="2-isopropylmalate synthase LeuA, allosteric (dimerisation) domain"/>
    <property type="match status" value="1"/>
</dbReference>
<dbReference type="SUPFAM" id="SSF51569">
    <property type="entry name" value="Aldolase"/>
    <property type="match status" value="1"/>
</dbReference>
<dbReference type="PROSITE" id="PS00815">
    <property type="entry name" value="AIPM_HOMOCIT_SYNTH_1"/>
    <property type="match status" value="1"/>
</dbReference>
<dbReference type="PROSITE" id="PS00816">
    <property type="entry name" value="AIPM_HOMOCIT_SYNTH_2"/>
    <property type="match status" value="1"/>
</dbReference>
<dbReference type="PROSITE" id="PS50991">
    <property type="entry name" value="PYR_CT"/>
    <property type="match status" value="1"/>
</dbReference>
<gene>
    <name evidence="1" type="primary">leuA</name>
    <name type="ordered locus">Cthe_1391</name>
</gene>
<organism>
    <name type="scientific">Acetivibrio thermocellus (strain ATCC 27405 / DSM 1237 / JCM 9322 / NBRC 103400 / NCIMB 10682 / NRRL B-4536 / VPI 7372)</name>
    <name type="common">Clostridium thermocellum</name>
    <dbReference type="NCBI Taxonomy" id="203119"/>
    <lineage>
        <taxon>Bacteria</taxon>
        <taxon>Bacillati</taxon>
        <taxon>Bacillota</taxon>
        <taxon>Clostridia</taxon>
        <taxon>Eubacteriales</taxon>
        <taxon>Oscillospiraceae</taxon>
        <taxon>Acetivibrio</taxon>
    </lineage>
</organism>
<keyword id="KW-0028">Amino-acid biosynthesis</keyword>
<keyword id="KW-0100">Branched-chain amino acid biosynthesis</keyword>
<keyword id="KW-0963">Cytoplasm</keyword>
<keyword id="KW-0432">Leucine biosynthesis</keyword>
<keyword id="KW-0464">Manganese</keyword>
<keyword id="KW-0479">Metal-binding</keyword>
<keyword id="KW-1185">Reference proteome</keyword>
<keyword id="KW-0808">Transferase</keyword>
<protein>
    <recommendedName>
        <fullName evidence="1">2-isopropylmalate synthase</fullName>
        <ecNumber evidence="1">2.3.3.13</ecNumber>
    </recommendedName>
    <alternativeName>
        <fullName evidence="1">Alpha-IPM synthase</fullName>
    </alternativeName>
    <alternativeName>
        <fullName evidence="1">Alpha-isopropylmalate synthase</fullName>
    </alternativeName>
</protein>
<evidence type="ECO:0000255" key="1">
    <source>
        <dbReference type="HAMAP-Rule" id="MF_01025"/>
    </source>
</evidence>
<name>LEU1_ACET2</name>
<feature type="chain" id="PRO_0000406893" description="2-isopropylmalate synthase">
    <location>
        <begin position="1"/>
        <end position="511"/>
    </location>
</feature>
<feature type="domain" description="Pyruvate carboxyltransferase" evidence="1">
    <location>
        <begin position="4"/>
        <end position="266"/>
    </location>
</feature>
<feature type="region of interest" description="Regulatory domain" evidence="1">
    <location>
        <begin position="391"/>
        <end position="511"/>
    </location>
</feature>
<feature type="binding site" evidence="1">
    <location>
        <position position="13"/>
    </location>
    <ligand>
        <name>Mn(2+)</name>
        <dbReference type="ChEBI" id="CHEBI:29035"/>
    </ligand>
</feature>
<feature type="binding site" evidence="1">
    <location>
        <position position="201"/>
    </location>
    <ligand>
        <name>Mn(2+)</name>
        <dbReference type="ChEBI" id="CHEBI:29035"/>
    </ligand>
</feature>
<feature type="binding site" evidence="1">
    <location>
        <position position="203"/>
    </location>
    <ligand>
        <name>Mn(2+)</name>
        <dbReference type="ChEBI" id="CHEBI:29035"/>
    </ligand>
</feature>
<feature type="binding site" evidence="1">
    <location>
        <position position="237"/>
    </location>
    <ligand>
        <name>Mn(2+)</name>
        <dbReference type="ChEBI" id="CHEBI:29035"/>
    </ligand>
</feature>
<accession>A3DF94</accession>
<sequence length="511" mass="56457">MRRIRIFDTTLRDGEQTPGVNLNIQEKVDIAKQLARLGVDVIEPGFPLTSPGDFEAVQRIAREVEGPYICGFSRAIIRDIDETWKAIKDAQKKCFHIFISSSDIQIKHQLGKTEKDVLEIVKSTVYHAKQYTDEVEYSPMDASRTRLEFLYEVIEAAIDNGATVINIPDTVGYATPIEFGELIQKIRKNVRNIDKAIISVHCHNDLGMAVANSIVAAMNGAQQIECTINGVGERAGNAALEEVVTHIAARKDYLGFETGIDLSQLYKTSKIVSRYMGIPIPVNKPIVGKNVFTHESGIHQDGVLKERSTYEVIDPRLVGRDDSVILLGKHSGRHALKVEAEKLGYDLDEERLNKLFNDFKKLTDVKKNVTTADLESLIIESAAKAVEEAYVLEKIRVVSGNIETPSAKVVIKDSKGNLLEAEQTGNGPVDAVFKAINSVIKETENLTLYKYSVSAVTEEMESLGEVSVTLREKEKLYTGIGTHTDIITSSAIAYIDAINKAIAANARAQKN</sequence>
<proteinExistence type="inferred from homology"/>
<comment type="function">
    <text evidence="1">Catalyzes the condensation of the acetyl group of acetyl-CoA with 3-methyl-2-oxobutanoate (2-ketoisovalerate) to form 3-carboxy-3-hydroxy-4-methylpentanoate (2-isopropylmalate).</text>
</comment>
<comment type="catalytic activity">
    <reaction evidence="1">
        <text>3-methyl-2-oxobutanoate + acetyl-CoA + H2O = (2S)-2-isopropylmalate + CoA + H(+)</text>
        <dbReference type="Rhea" id="RHEA:21524"/>
        <dbReference type="ChEBI" id="CHEBI:1178"/>
        <dbReference type="ChEBI" id="CHEBI:11851"/>
        <dbReference type="ChEBI" id="CHEBI:15377"/>
        <dbReference type="ChEBI" id="CHEBI:15378"/>
        <dbReference type="ChEBI" id="CHEBI:57287"/>
        <dbReference type="ChEBI" id="CHEBI:57288"/>
        <dbReference type="EC" id="2.3.3.13"/>
    </reaction>
</comment>
<comment type="cofactor">
    <cofactor evidence="1">
        <name>Mn(2+)</name>
        <dbReference type="ChEBI" id="CHEBI:29035"/>
    </cofactor>
</comment>
<comment type="pathway">
    <text evidence="1">Amino-acid biosynthesis; L-leucine biosynthesis; L-leucine from 3-methyl-2-oxobutanoate: step 1/4.</text>
</comment>
<comment type="subunit">
    <text evidence="1">Homodimer.</text>
</comment>
<comment type="subcellular location">
    <subcellularLocation>
        <location evidence="1">Cytoplasm</location>
    </subcellularLocation>
</comment>
<comment type="similarity">
    <text evidence="1">Belongs to the alpha-IPM synthase/homocitrate synthase family. LeuA type 1 subfamily.</text>
</comment>
<reference key="1">
    <citation type="submission" date="2007-02" db="EMBL/GenBank/DDBJ databases">
        <title>Complete sequence of Clostridium thermocellum ATCC 27405.</title>
        <authorList>
            <consortium name="US DOE Joint Genome Institute"/>
            <person name="Copeland A."/>
            <person name="Lucas S."/>
            <person name="Lapidus A."/>
            <person name="Barry K."/>
            <person name="Detter J.C."/>
            <person name="Glavina del Rio T."/>
            <person name="Hammon N."/>
            <person name="Israni S."/>
            <person name="Dalin E."/>
            <person name="Tice H."/>
            <person name="Pitluck S."/>
            <person name="Chertkov O."/>
            <person name="Brettin T."/>
            <person name="Bruce D."/>
            <person name="Han C."/>
            <person name="Tapia R."/>
            <person name="Gilna P."/>
            <person name="Schmutz J."/>
            <person name="Larimer F."/>
            <person name="Land M."/>
            <person name="Hauser L."/>
            <person name="Kyrpides N."/>
            <person name="Mikhailova N."/>
            <person name="Wu J.H.D."/>
            <person name="Newcomb M."/>
            <person name="Richardson P."/>
        </authorList>
    </citation>
    <scope>NUCLEOTIDE SEQUENCE [LARGE SCALE GENOMIC DNA]</scope>
    <source>
        <strain>ATCC 27405 / DSM 1237 / JCM 9322 / NBRC 103400 / NCIMB 10682 / NRRL B-4536 / VPI 7372</strain>
    </source>
</reference>